<accession>Q20025</accession>
<accession>Q5GHR1</accession>
<name>PROF2_CAEEL</name>
<gene>
    <name type="primary">pfn-2</name>
    <name type="ORF">F35C8.6</name>
</gene>
<comment type="function">
    <text evidence="1">Binds to actin and affects the structure of the cytoskeleton. At high concentrations, profilin prevents the polymerization of actin, whereas it enhances it at low concentrations. By binding to PIP2, it inhibits the formation of IP3 and DG (By similarity).</text>
</comment>
<comment type="subunit">
    <text evidence="1">Occurs in many kinds of cells as a complex with monomeric actin in a 1:1 ratio.</text>
</comment>
<comment type="subcellular location">
    <subcellularLocation>
        <location evidence="1">Cytoplasm</location>
        <location evidence="1">Cytoskeleton</location>
    </subcellularLocation>
</comment>
<comment type="tissue specificity">
    <text evidence="2">Expressed in the intestinal wall, the spermatheca, and the pharynx.</text>
</comment>
<comment type="similarity">
    <text evidence="3">Belongs to the profilin family.</text>
</comment>
<organism>
    <name type="scientific">Caenorhabditis elegans</name>
    <dbReference type="NCBI Taxonomy" id="6239"/>
    <lineage>
        <taxon>Eukaryota</taxon>
        <taxon>Metazoa</taxon>
        <taxon>Ecdysozoa</taxon>
        <taxon>Nematoda</taxon>
        <taxon>Chromadorea</taxon>
        <taxon>Rhabditida</taxon>
        <taxon>Rhabditina</taxon>
        <taxon>Rhabditomorpha</taxon>
        <taxon>Rhabditoidea</taxon>
        <taxon>Rhabditidae</taxon>
        <taxon>Peloderinae</taxon>
        <taxon>Caenorhabditis</taxon>
    </lineage>
</organism>
<feature type="chain" id="PRO_0000199591" description="Profilin-2">
    <location>
        <begin position="1"/>
        <end position="131"/>
    </location>
</feature>
<keyword id="KW-0009">Actin-binding</keyword>
<keyword id="KW-0963">Cytoplasm</keyword>
<keyword id="KW-0206">Cytoskeleton</keyword>
<keyword id="KW-1185">Reference proteome</keyword>
<dbReference type="EMBL" id="AY530909">
    <property type="protein sequence ID" value="AAT01434.1"/>
    <property type="molecule type" value="mRNA"/>
</dbReference>
<dbReference type="EMBL" id="FO080312">
    <property type="protein sequence ID" value="CCD62785.1"/>
    <property type="molecule type" value="Genomic_DNA"/>
</dbReference>
<dbReference type="PIR" id="T16253">
    <property type="entry name" value="T16253"/>
</dbReference>
<dbReference type="RefSeq" id="NP_508910.3">
    <property type="nucleotide sequence ID" value="NM_076509.5"/>
</dbReference>
<dbReference type="SMR" id="Q20025"/>
<dbReference type="BioGRID" id="45741">
    <property type="interactions" value="23"/>
</dbReference>
<dbReference type="FunCoup" id="Q20025">
    <property type="interactions" value="2"/>
</dbReference>
<dbReference type="STRING" id="6239.F35C8.6.1"/>
<dbReference type="PaxDb" id="6239-F35C8.6"/>
<dbReference type="PeptideAtlas" id="Q20025"/>
<dbReference type="EnsemblMetazoa" id="F35C8.6.1">
    <property type="protein sequence ID" value="F35C8.6.1"/>
    <property type="gene ID" value="WBGene00003990"/>
</dbReference>
<dbReference type="GeneID" id="180808"/>
<dbReference type="KEGG" id="cel:CELE_F35C8.6"/>
<dbReference type="UCSC" id="F35C8.6">
    <property type="organism name" value="c. elegans"/>
</dbReference>
<dbReference type="AGR" id="WB:WBGene00003990"/>
<dbReference type="CTD" id="180808"/>
<dbReference type="WormBase" id="F35C8.6">
    <property type="protein sequence ID" value="CE39098"/>
    <property type="gene ID" value="WBGene00003990"/>
    <property type="gene designation" value="pfn-2"/>
</dbReference>
<dbReference type="eggNOG" id="KOG1755">
    <property type="taxonomic scope" value="Eukaryota"/>
</dbReference>
<dbReference type="HOGENOM" id="CLU_120772_3_0_1"/>
<dbReference type="InParanoid" id="Q20025"/>
<dbReference type="OMA" id="IVIAMYE"/>
<dbReference type="OrthoDB" id="421374at2759"/>
<dbReference type="PhylomeDB" id="Q20025"/>
<dbReference type="PRO" id="PR:Q20025"/>
<dbReference type="Proteomes" id="UP000001940">
    <property type="component" value="Chromosome X"/>
</dbReference>
<dbReference type="Bgee" id="WBGene00003990">
    <property type="expression patterns" value="Expressed in pharyngeal muscle cell (C elegans) and 3 other cell types or tissues"/>
</dbReference>
<dbReference type="GO" id="GO:0005938">
    <property type="term" value="C:cell cortex"/>
    <property type="evidence" value="ECO:0000318"/>
    <property type="project" value="GO_Central"/>
</dbReference>
<dbReference type="GO" id="GO:0005856">
    <property type="term" value="C:cytoskeleton"/>
    <property type="evidence" value="ECO:0007669"/>
    <property type="project" value="UniProtKB-SubCell"/>
</dbReference>
<dbReference type="GO" id="GO:0003785">
    <property type="term" value="F:actin monomer binding"/>
    <property type="evidence" value="ECO:0000318"/>
    <property type="project" value="GO_Central"/>
</dbReference>
<dbReference type="GO" id="GO:0071689">
    <property type="term" value="P:muscle thin filament assembly"/>
    <property type="evidence" value="ECO:0000316"/>
    <property type="project" value="WormBase"/>
</dbReference>
<dbReference type="CDD" id="cd00148">
    <property type="entry name" value="PROF"/>
    <property type="match status" value="1"/>
</dbReference>
<dbReference type="FunFam" id="3.30.450.30:FF:000020">
    <property type="entry name" value="Profilin"/>
    <property type="match status" value="1"/>
</dbReference>
<dbReference type="Gene3D" id="3.30.450.30">
    <property type="entry name" value="Dynein light chain 2a, cytoplasmic"/>
    <property type="match status" value="1"/>
</dbReference>
<dbReference type="InterPro" id="IPR048278">
    <property type="entry name" value="PFN"/>
</dbReference>
<dbReference type="InterPro" id="IPR005455">
    <property type="entry name" value="PFN_euk"/>
</dbReference>
<dbReference type="InterPro" id="IPR036140">
    <property type="entry name" value="PFN_sf"/>
</dbReference>
<dbReference type="PANTHER" id="PTHR11604">
    <property type="entry name" value="PROFILIN"/>
    <property type="match status" value="1"/>
</dbReference>
<dbReference type="PANTHER" id="PTHR11604:SF1">
    <property type="entry name" value="PROFILIN-2"/>
    <property type="match status" value="1"/>
</dbReference>
<dbReference type="Pfam" id="PF00235">
    <property type="entry name" value="Profilin"/>
    <property type="match status" value="1"/>
</dbReference>
<dbReference type="SMART" id="SM00392">
    <property type="entry name" value="PROF"/>
    <property type="match status" value="1"/>
</dbReference>
<dbReference type="SUPFAM" id="SSF55770">
    <property type="entry name" value="Profilin (actin-binding protein)"/>
    <property type="match status" value="1"/>
</dbReference>
<proteinExistence type="evidence at transcript level"/>
<sequence length="131" mass="14244">MSGWDDYIKLLFGKSPAIKRAAIIGSDGSVWARSGDANAFRATEVELKRFAALFNDINSVPGTGADLEEIHYIVPRVEEKLIFGKKEQTGFFAAKTNQAIVIAMYEGDNAQSASVRAGVEYIAQYLASSGY</sequence>
<evidence type="ECO:0000250" key="1"/>
<evidence type="ECO:0000269" key="2">
    <source>
    </source>
</evidence>
<evidence type="ECO:0000305" key="3"/>
<protein>
    <recommendedName>
        <fullName>Profilin-2</fullName>
    </recommendedName>
</protein>
<reference key="1">
    <citation type="journal article" date="2006" name="Cell Motil. Cytoskeleton">
        <title>Caenorhabditis elegans expresses three functional profilins in a tissue-specific manner.</title>
        <authorList>
            <person name="Polet D."/>
            <person name="Lambrechts A."/>
            <person name="Ono K."/>
            <person name="Mah A."/>
            <person name="Peelman F."/>
            <person name="Vandekerckhove J."/>
            <person name="Baillie D.L."/>
            <person name="Ampe C."/>
            <person name="Ono S."/>
        </authorList>
    </citation>
    <scope>NUCLEOTIDE SEQUENCE [MRNA]</scope>
    <scope>TISSUE SPECIFICITY</scope>
</reference>
<reference key="2">
    <citation type="journal article" date="1998" name="Science">
        <title>Genome sequence of the nematode C. elegans: a platform for investigating biology.</title>
        <authorList>
            <consortium name="The C. elegans sequencing consortium"/>
        </authorList>
    </citation>
    <scope>NUCLEOTIDE SEQUENCE [LARGE SCALE GENOMIC DNA]</scope>
    <source>
        <strain>Bristol N2</strain>
    </source>
</reference>